<keyword id="KW-0012">Acyltransferase</keyword>
<keyword id="KW-0963">Cytoplasm</keyword>
<keyword id="KW-0441">Lipid A biosynthesis</keyword>
<keyword id="KW-0444">Lipid biosynthesis</keyword>
<keyword id="KW-0443">Lipid metabolism</keyword>
<keyword id="KW-0677">Repeat</keyword>
<keyword id="KW-0808">Transferase</keyword>
<sequence length="258" mass="27956">MSSIDPRAIIDPSARLADDVVVGPWSIVGPDVEIGEGTVIGPHVVLKGPTVIGKHNRIYQFSSVGEDTPDLKYKGEPTRLVIGDHNTIREGVTIHRGTVQDRSETTIGDHNLIMAYAHIGHDSVIGNHCILVNNTALAGHVWVDDWAILSGYTLVHQFCRIGAHSFSGMGTAIGKDVPAYVTVFGNPAEARSMNFEGMRRRGFSAEAIAALRKAYKLVYRQGLTVEQALTELAESAAQFPEVAVFRDSIQASTRGITR</sequence>
<evidence type="ECO:0000255" key="1">
    <source>
        <dbReference type="HAMAP-Rule" id="MF_00387"/>
    </source>
</evidence>
<proteinExistence type="inferred from homology"/>
<dbReference type="EC" id="2.3.1.129" evidence="1"/>
<dbReference type="EMBL" id="CP000680">
    <property type="protein sequence ID" value="ABP85795.1"/>
    <property type="molecule type" value="Genomic_DNA"/>
</dbReference>
<dbReference type="SMR" id="A4XWS9"/>
<dbReference type="STRING" id="399739.Pmen_3041"/>
<dbReference type="KEGG" id="pmy:Pmen_3041"/>
<dbReference type="PATRIC" id="fig|399739.8.peg.3087"/>
<dbReference type="eggNOG" id="COG1043">
    <property type="taxonomic scope" value="Bacteria"/>
</dbReference>
<dbReference type="HOGENOM" id="CLU_061249_0_0_6"/>
<dbReference type="OrthoDB" id="9807278at2"/>
<dbReference type="UniPathway" id="UPA00359">
    <property type="reaction ID" value="UER00477"/>
</dbReference>
<dbReference type="GO" id="GO:0005737">
    <property type="term" value="C:cytoplasm"/>
    <property type="evidence" value="ECO:0007669"/>
    <property type="project" value="UniProtKB-SubCell"/>
</dbReference>
<dbReference type="GO" id="GO:0016020">
    <property type="term" value="C:membrane"/>
    <property type="evidence" value="ECO:0007669"/>
    <property type="project" value="GOC"/>
</dbReference>
<dbReference type="GO" id="GO:0008780">
    <property type="term" value="F:acyl-[acyl-carrier-protein]-UDP-N-acetylglucosamine O-acyltransferase activity"/>
    <property type="evidence" value="ECO:0007669"/>
    <property type="project" value="UniProtKB-UniRule"/>
</dbReference>
<dbReference type="GO" id="GO:0009245">
    <property type="term" value="P:lipid A biosynthetic process"/>
    <property type="evidence" value="ECO:0007669"/>
    <property type="project" value="UniProtKB-UniRule"/>
</dbReference>
<dbReference type="CDD" id="cd03351">
    <property type="entry name" value="LbH_UDP-GlcNAc_AT"/>
    <property type="match status" value="1"/>
</dbReference>
<dbReference type="FunFam" id="2.160.10.10:FF:000003">
    <property type="entry name" value="Acyl-[acyl-carrier-protein]--UDP-N-acetylglucosamine O-acyltransferase"/>
    <property type="match status" value="1"/>
</dbReference>
<dbReference type="Gene3D" id="2.160.10.10">
    <property type="entry name" value="Hexapeptide repeat proteins"/>
    <property type="match status" value="1"/>
</dbReference>
<dbReference type="Gene3D" id="1.20.1180.10">
    <property type="entry name" value="Udp N-acetylglucosamine O-acyltransferase, C-terminal domain"/>
    <property type="match status" value="1"/>
</dbReference>
<dbReference type="HAMAP" id="MF_00387">
    <property type="entry name" value="LpxA"/>
    <property type="match status" value="1"/>
</dbReference>
<dbReference type="InterPro" id="IPR029098">
    <property type="entry name" value="Acetyltransf_C"/>
</dbReference>
<dbReference type="InterPro" id="IPR037157">
    <property type="entry name" value="Acetyltransf_C_sf"/>
</dbReference>
<dbReference type="InterPro" id="IPR001451">
    <property type="entry name" value="Hexapep"/>
</dbReference>
<dbReference type="InterPro" id="IPR018357">
    <property type="entry name" value="Hexapep_transf_CS"/>
</dbReference>
<dbReference type="InterPro" id="IPR010137">
    <property type="entry name" value="Lipid_A_LpxA"/>
</dbReference>
<dbReference type="InterPro" id="IPR011004">
    <property type="entry name" value="Trimer_LpxA-like_sf"/>
</dbReference>
<dbReference type="NCBIfam" id="TIGR01852">
    <property type="entry name" value="lipid_A_lpxA"/>
    <property type="match status" value="1"/>
</dbReference>
<dbReference type="NCBIfam" id="NF003657">
    <property type="entry name" value="PRK05289.1"/>
    <property type="match status" value="1"/>
</dbReference>
<dbReference type="PANTHER" id="PTHR43480">
    <property type="entry name" value="ACYL-[ACYL-CARRIER-PROTEIN]--UDP-N-ACETYLGLUCOSAMINE O-ACYLTRANSFERASE"/>
    <property type="match status" value="1"/>
</dbReference>
<dbReference type="PANTHER" id="PTHR43480:SF1">
    <property type="entry name" value="ACYL-[ACYL-CARRIER-PROTEIN]--UDP-N-ACETYLGLUCOSAMINE O-ACYLTRANSFERASE, MITOCHONDRIAL-RELATED"/>
    <property type="match status" value="1"/>
</dbReference>
<dbReference type="Pfam" id="PF13720">
    <property type="entry name" value="Acetyltransf_11"/>
    <property type="match status" value="1"/>
</dbReference>
<dbReference type="Pfam" id="PF00132">
    <property type="entry name" value="Hexapep"/>
    <property type="match status" value="2"/>
</dbReference>
<dbReference type="PIRSF" id="PIRSF000456">
    <property type="entry name" value="UDP-GlcNAc_acltr"/>
    <property type="match status" value="1"/>
</dbReference>
<dbReference type="SUPFAM" id="SSF51161">
    <property type="entry name" value="Trimeric LpxA-like enzymes"/>
    <property type="match status" value="1"/>
</dbReference>
<dbReference type="PROSITE" id="PS00101">
    <property type="entry name" value="HEXAPEP_TRANSFERASES"/>
    <property type="match status" value="1"/>
</dbReference>
<name>LPXA_ECTM1</name>
<feature type="chain" id="PRO_1000013172" description="Acyl-[acyl-carrier-protein]--UDP-N-acetylglucosamine O-acyltransferase">
    <location>
        <begin position="1"/>
        <end position="258"/>
    </location>
</feature>
<gene>
    <name evidence="1" type="primary">lpxA</name>
    <name type="ordered locus">Pmen_3041</name>
</gene>
<organism>
    <name type="scientific">Ectopseudomonas mendocina (strain ymp)</name>
    <name type="common">Pseudomonas mendocina</name>
    <dbReference type="NCBI Taxonomy" id="399739"/>
    <lineage>
        <taxon>Bacteria</taxon>
        <taxon>Pseudomonadati</taxon>
        <taxon>Pseudomonadota</taxon>
        <taxon>Gammaproteobacteria</taxon>
        <taxon>Pseudomonadales</taxon>
        <taxon>Pseudomonadaceae</taxon>
        <taxon>Ectopseudomonas</taxon>
    </lineage>
</organism>
<accession>A4XWS9</accession>
<comment type="function">
    <text evidence="1">Involved in the biosynthesis of lipid A, a phosphorylated glycolipid that anchors the lipopolysaccharide to the outer membrane of the cell.</text>
</comment>
<comment type="catalytic activity">
    <reaction evidence="1">
        <text>a (3R)-hydroxyacyl-[ACP] + UDP-N-acetyl-alpha-D-glucosamine = a UDP-3-O-[(3R)-3-hydroxyacyl]-N-acetyl-alpha-D-glucosamine + holo-[ACP]</text>
        <dbReference type="Rhea" id="RHEA:67812"/>
        <dbReference type="Rhea" id="RHEA-COMP:9685"/>
        <dbReference type="Rhea" id="RHEA-COMP:9945"/>
        <dbReference type="ChEBI" id="CHEBI:57705"/>
        <dbReference type="ChEBI" id="CHEBI:64479"/>
        <dbReference type="ChEBI" id="CHEBI:78827"/>
        <dbReference type="ChEBI" id="CHEBI:173225"/>
        <dbReference type="EC" id="2.3.1.129"/>
    </reaction>
</comment>
<comment type="pathway">
    <text evidence="1">Glycolipid biosynthesis; lipid IV(A) biosynthesis; lipid IV(A) from (3R)-3-hydroxytetradecanoyl-[acyl-carrier-protein] and UDP-N-acetyl-alpha-D-glucosamine: step 1/6.</text>
</comment>
<comment type="subunit">
    <text evidence="1">Homotrimer.</text>
</comment>
<comment type="subcellular location">
    <subcellularLocation>
        <location evidence="1">Cytoplasm</location>
    </subcellularLocation>
</comment>
<comment type="similarity">
    <text evidence="1">Belongs to the transferase hexapeptide repeat family. LpxA subfamily.</text>
</comment>
<reference key="1">
    <citation type="submission" date="2007-04" db="EMBL/GenBank/DDBJ databases">
        <title>Complete sequence of Pseudomonas mendocina ymp.</title>
        <authorList>
            <consortium name="US DOE Joint Genome Institute"/>
            <person name="Copeland A."/>
            <person name="Lucas S."/>
            <person name="Lapidus A."/>
            <person name="Barry K."/>
            <person name="Glavina del Rio T."/>
            <person name="Dalin E."/>
            <person name="Tice H."/>
            <person name="Pitluck S."/>
            <person name="Kiss H."/>
            <person name="Brettin T."/>
            <person name="Detter J.C."/>
            <person name="Bruce D."/>
            <person name="Han C."/>
            <person name="Schmutz J."/>
            <person name="Larimer F."/>
            <person name="Land M."/>
            <person name="Hauser L."/>
            <person name="Kyrpides N."/>
            <person name="Mikhailova N."/>
            <person name="Hersman L."/>
            <person name="Dubois J."/>
            <person name="Maurice P."/>
            <person name="Richardson P."/>
        </authorList>
    </citation>
    <scope>NUCLEOTIDE SEQUENCE [LARGE SCALE GENOMIC DNA]</scope>
    <source>
        <strain>ymp</strain>
    </source>
</reference>
<protein>
    <recommendedName>
        <fullName evidence="1">Acyl-[acyl-carrier-protein]--UDP-N-acetylglucosamine O-acyltransferase</fullName>
        <shortName evidence="1">UDP-N-acetylglucosamine acyltransferase</shortName>
        <ecNumber evidence="1">2.3.1.129</ecNumber>
    </recommendedName>
</protein>